<reference key="1">
    <citation type="journal article" date="2009" name="J. Bacteriol.">
        <title>Genomic sequencing reveals regulatory mutations and recombinational events in the widely used MC4100 lineage of Escherichia coli K-12.</title>
        <authorList>
            <person name="Ferenci T."/>
            <person name="Zhou Z."/>
            <person name="Betteridge T."/>
            <person name="Ren Y."/>
            <person name="Liu Y."/>
            <person name="Feng L."/>
            <person name="Reeves P.R."/>
            <person name="Wang L."/>
        </authorList>
    </citation>
    <scope>NUCLEOTIDE SEQUENCE [LARGE SCALE GENOMIC DNA]</scope>
    <source>
        <strain>K12 / MC4100 / BW2952</strain>
    </source>
</reference>
<dbReference type="EMBL" id="CP001396">
    <property type="protein sequence ID" value="ACR65439.1"/>
    <property type="molecule type" value="Genomic_DNA"/>
</dbReference>
<dbReference type="RefSeq" id="WP_000520781.1">
    <property type="nucleotide sequence ID" value="NC_012759.1"/>
</dbReference>
<dbReference type="SMR" id="C4ZY53"/>
<dbReference type="GeneID" id="86863397"/>
<dbReference type="KEGG" id="ebw:BWG_0734"/>
<dbReference type="HOGENOM" id="CLU_134358_2_1_6"/>
<dbReference type="GO" id="GO:0030163">
    <property type="term" value="P:protein catabolic process"/>
    <property type="evidence" value="ECO:0007669"/>
    <property type="project" value="InterPro"/>
</dbReference>
<dbReference type="GO" id="GO:0006508">
    <property type="term" value="P:proteolysis"/>
    <property type="evidence" value="ECO:0007669"/>
    <property type="project" value="UniProtKB-UniRule"/>
</dbReference>
<dbReference type="FunFam" id="3.30.1390.10:FF:000002">
    <property type="entry name" value="ATP-dependent Clp protease adapter protein ClpS"/>
    <property type="match status" value="1"/>
</dbReference>
<dbReference type="Gene3D" id="3.30.1390.10">
    <property type="match status" value="1"/>
</dbReference>
<dbReference type="HAMAP" id="MF_00302">
    <property type="entry name" value="ClpS"/>
    <property type="match status" value="1"/>
</dbReference>
<dbReference type="InterPro" id="IPR022935">
    <property type="entry name" value="ClpS"/>
</dbReference>
<dbReference type="InterPro" id="IPR003769">
    <property type="entry name" value="ClpS_core"/>
</dbReference>
<dbReference type="InterPro" id="IPR014719">
    <property type="entry name" value="Ribosomal_bL12_C/ClpS-like"/>
</dbReference>
<dbReference type="NCBIfam" id="NF000670">
    <property type="entry name" value="PRK00033.1-3"/>
    <property type="match status" value="1"/>
</dbReference>
<dbReference type="NCBIfam" id="NF000672">
    <property type="entry name" value="PRK00033.1-5"/>
    <property type="match status" value="1"/>
</dbReference>
<dbReference type="PANTHER" id="PTHR33473:SF19">
    <property type="entry name" value="ATP-DEPENDENT CLP PROTEASE ADAPTER PROTEIN CLPS"/>
    <property type="match status" value="1"/>
</dbReference>
<dbReference type="PANTHER" id="PTHR33473">
    <property type="entry name" value="ATP-DEPENDENT CLP PROTEASE ADAPTER PROTEIN CLPS1, CHLOROPLASTIC"/>
    <property type="match status" value="1"/>
</dbReference>
<dbReference type="Pfam" id="PF02617">
    <property type="entry name" value="ClpS"/>
    <property type="match status" value="1"/>
</dbReference>
<dbReference type="SUPFAM" id="SSF54736">
    <property type="entry name" value="ClpS-like"/>
    <property type="match status" value="1"/>
</dbReference>
<name>CLPS_ECOBW</name>
<organism>
    <name type="scientific">Escherichia coli (strain K12 / MC4100 / BW2952)</name>
    <dbReference type="NCBI Taxonomy" id="595496"/>
    <lineage>
        <taxon>Bacteria</taxon>
        <taxon>Pseudomonadati</taxon>
        <taxon>Pseudomonadota</taxon>
        <taxon>Gammaproteobacteria</taxon>
        <taxon>Enterobacterales</taxon>
        <taxon>Enterobacteriaceae</taxon>
        <taxon>Escherichia</taxon>
    </lineage>
</organism>
<accession>C4ZY53</accession>
<feature type="chain" id="PRO_1000204972" description="ATP-dependent Clp protease adapter protein ClpS">
    <location>
        <begin position="1"/>
        <end position="106"/>
    </location>
</feature>
<proteinExistence type="inferred from homology"/>
<gene>
    <name evidence="1" type="primary">clpS</name>
    <name type="ordered locus">BWG_0734</name>
</gene>
<comment type="function">
    <text evidence="1">Involved in the modulation of the specificity of the ClpAP-mediated ATP-dependent protein degradation.</text>
</comment>
<comment type="subunit">
    <text evidence="1">Binds to the N-terminal domain of the chaperone ClpA.</text>
</comment>
<comment type="similarity">
    <text evidence="1">Belongs to the ClpS family.</text>
</comment>
<sequence>MGKTNDWLDFDQLAEEKVRDALKPPSMYKVILVNDDYTPMEFVIDVLQKFFSYDVERATQLMLAVHYQGKAICGVFTAEVAETKVAMVNKYARENEHPLLCTLEKA</sequence>
<protein>
    <recommendedName>
        <fullName evidence="1">ATP-dependent Clp protease adapter protein ClpS</fullName>
    </recommendedName>
</protein>
<evidence type="ECO:0000255" key="1">
    <source>
        <dbReference type="HAMAP-Rule" id="MF_00302"/>
    </source>
</evidence>